<reference key="1">
    <citation type="journal article" date="2002" name="Nat. Biotechnol.">
        <title>Genome sequence of the dissimilatory metal ion-reducing bacterium Shewanella oneidensis.</title>
        <authorList>
            <person name="Heidelberg J.F."/>
            <person name="Paulsen I.T."/>
            <person name="Nelson K.E."/>
            <person name="Gaidos E.J."/>
            <person name="Nelson W.C."/>
            <person name="Read T.D."/>
            <person name="Eisen J.A."/>
            <person name="Seshadri R."/>
            <person name="Ward N.L."/>
            <person name="Methe B.A."/>
            <person name="Clayton R.A."/>
            <person name="Meyer T."/>
            <person name="Tsapin A."/>
            <person name="Scott J."/>
            <person name="Beanan M.J."/>
            <person name="Brinkac L.M."/>
            <person name="Daugherty S.C."/>
            <person name="DeBoy R.T."/>
            <person name="Dodson R.J."/>
            <person name="Durkin A.S."/>
            <person name="Haft D.H."/>
            <person name="Kolonay J.F."/>
            <person name="Madupu R."/>
            <person name="Peterson J.D."/>
            <person name="Umayam L.A."/>
            <person name="White O."/>
            <person name="Wolf A.M."/>
            <person name="Vamathevan J.J."/>
            <person name="Weidman J.F."/>
            <person name="Impraim M."/>
            <person name="Lee K."/>
            <person name="Berry K.J."/>
            <person name="Lee C."/>
            <person name="Mueller J."/>
            <person name="Khouri H.M."/>
            <person name="Gill J."/>
            <person name="Utterback T.R."/>
            <person name="McDonald L.A."/>
            <person name="Feldblyum T.V."/>
            <person name="Smith H.O."/>
            <person name="Venter J.C."/>
            <person name="Nealson K.H."/>
            <person name="Fraser C.M."/>
        </authorList>
    </citation>
    <scope>NUCLEOTIDE SEQUENCE [LARGE SCALE GENOMIC DNA]</scope>
    <source>
        <strain>ATCC 700550 / JCM 31522 / CIP 106686 / LMG 19005 / NCIMB 14063 / MR-1</strain>
    </source>
</reference>
<accession>Q8EI29</accession>
<protein>
    <recommendedName>
        <fullName evidence="1">NADH-quinone oxidoreductase subunit A</fullName>
        <ecNumber evidence="1">7.1.1.-</ecNumber>
    </recommendedName>
    <alternativeName>
        <fullName evidence="1">NADH dehydrogenase I subunit A</fullName>
    </alternativeName>
    <alternativeName>
        <fullName evidence="1">NDH-1 subunit A</fullName>
    </alternativeName>
    <alternativeName>
        <fullName evidence="1">NUO1</fullName>
    </alternativeName>
</protein>
<comment type="function">
    <text evidence="1">NDH-1 shuttles electrons from NADH, via FMN and iron-sulfur (Fe-S) centers, to quinones in the respiratory chain. The immediate electron acceptor for the enzyme in this species is believed to be ubiquinone. Couples the redox reaction to proton translocation (for every two electrons transferred, four hydrogen ions are translocated across the cytoplasmic membrane), and thus conserves the redox energy in a proton gradient.</text>
</comment>
<comment type="catalytic activity">
    <reaction evidence="1">
        <text>a quinone + NADH + 5 H(+)(in) = a quinol + NAD(+) + 4 H(+)(out)</text>
        <dbReference type="Rhea" id="RHEA:57888"/>
        <dbReference type="ChEBI" id="CHEBI:15378"/>
        <dbReference type="ChEBI" id="CHEBI:24646"/>
        <dbReference type="ChEBI" id="CHEBI:57540"/>
        <dbReference type="ChEBI" id="CHEBI:57945"/>
        <dbReference type="ChEBI" id="CHEBI:132124"/>
    </reaction>
</comment>
<comment type="subunit">
    <text evidence="1">NDH-1 is composed of 13 different subunits. Subunits NuoA, H, J, K, L, M, N constitute the membrane sector of the complex.</text>
</comment>
<comment type="subcellular location">
    <subcellularLocation>
        <location evidence="1">Cell inner membrane</location>
        <topology evidence="1">Multi-pass membrane protein</topology>
    </subcellularLocation>
</comment>
<comment type="similarity">
    <text evidence="1">Belongs to the complex I subunit 3 family.</text>
</comment>
<evidence type="ECO:0000255" key="1">
    <source>
        <dbReference type="HAMAP-Rule" id="MF_01394"/>
    </source>
</evidence>
<proteinExistence type="inferred from homology"/>
<dbReference type="EC" id="7.1.1.-" evidence="1"/>
<dbReference type="EMBL" id="AE014299">
    <property type="protein sequence ID" value="AAN54094.1"/>
    <property type="molecule type" value="Genomic_DNA"/>
</dbReference>
<dbReference type="RefSeq" id="NP_716649.1">
    <property type="nucleotide sequence ID" value="NC_004347.2"/>
</dbReference>
<dbReference type="RefSeq" id="WP_011071286.1">
    <property type="nucleotide sequence ID" value="NC_004347.2"/>
</dbReference>
<dbReference type="SMR" id="Q8EI29"/>
<dbReference type="STRING" id="211586.SO_1021"/>
<dbReference type="PaxDb" id="211586-SO_1021"/>
<dbReference type="DNASU" id="1168863"/>
<dbReference type="KEGG" id="son:SO_1021"/>
<dbReference type="PATRIC" id="fig|211586.12.peg.977"/>
<dbReference type="eggNOG" id="COG0838">
    <property type="taxonomic scope" value="Bacteria"/>
</dbReference>
<dbReference type="HOGENOM" id="CLU_119549_2_1_6"/>
<dbReference type="OrthoDB" id="9791970at2"/>
<dbReference type="PhylomeDB" id="Q8EI29"/>
<dbReference type="BioCyc" id="SONE211586:G1GMP-947-MONOMER"/>
<dbReference type="Proteomes" id="UP000008186">
    <property type="component" value="Chromosome"/>
</dbReference>
<dbReference type="GO" id="GO:0005886">
    <property type="term" value="C:plasma membrane"/>
    <property type="evidence" value="ECO:0007669"/>
    <property type="project" value="UniProtKB-SubCell"/>
</dbReference>
<dbReference type="GO" id="GO:0045271">
    <property type="term" value="C:respiratory chain complex I"/>
    <property type="evidence" value="ECO:0000318"/>
    <property type="project" value="GO_Central"/>
</dbReference>
<dbReference type="GO" id="GO:0008137">
    <property type="term" value="F:NADH dehydrogenase (ubiquinone) activity"/>
    <property type="evidence" value="ECO:0000318"/>
    <property type="project" value="GO_Central"/>
</dbReference>
<dbReference type="GO" id="GO:0050136">
    <property type="term" value="F:NADH:ubiquinone reductase (non-electrogenic) activity"/>
    <property type="evidence" value="ECO:0007669"/>
    <property type="project" value="UniProtKB-UniRule"/>
</dbReference>
<dbReference type="GO" id="GO:0048038">
    <property type="term" value="F:quinone binding"/>
    <property type="evidence" value="ECO:0007669"/>
    <property type="project" value="UniProtKB-KW"/>
</dbReference>
<dbReference type="FunFam" id="1.20.58.1610:FF:000003">
    <property type="entry name" value="NADH-quinone oxidoreductase subunit A"/>
    <property type="match status" value="1"/>
</dbReference>
<dbReference type="Gene3D" id="1.20.58.1610">
    <property type="entry name" value="NADH:ubiquinone/plastoquinone oxidoreductase, chain 3"/>
    <property type="match status" value="1"/>
</dbReference>
<dbReference type="HAMAP" id="MF_01394">
    <property type="entry name" value="NDH1_NuoA"/>
    <property type="match status" value="1"/>
</dbReference>
<dbReference type="InterPro" id="IPR023043">
    <property type="entry name" value="NAD(P)H_OxRDtase_bac/plastid"/>
</dbReference>
<dbReference type="InterPro" id="IPR000440">
    <property type="entry name" value="NADH_UbQ/plastoQ_OxRdtase_su3"/>
</dbReference>
<dbReference type="InterPro" id="IPR038430">
    <property type="entry name" value="NDAH_ubi_oxred_su3_sf"/>
</dbReference>
<dbReference type="PANTHER" id="PTHR11058:SF21">
    <property type="entry name" value="NADH-QUINONE OXIDOREDUCTASE SUBUNIT A"/>
    <property type="match status" value="1"/>
</dbReference>
<dbReference type="PANTHER" id="PTHR11058">
    <property type="entry name" value="NADH-UBIQUINONE OXIDOREDUCTASE CHAIN 3"/>
    <property type="match status" value="1"/>
</dbReference>
<dbReference type="Pfam" id="PF00507">
    <property type="entry name" value="Oxidored_q4"/>
    <property type="match status" value="1"/>
</dbReference>
<keyword id="KW-0997">Cell inner membrane</keyword>
<keyword id="KW-1003">Cell membrane</keyword>
<keyword id="KW-0472">Membrane</keyword>
<keyword id="KW-0520">NAD</keyword>
<keyword id="KW-0874">Quinone</keyword>
<keyword id="KW-1185">Reference proteome</keyword>
<keyword id="KW-1278">Translocase</keyword>
<keyword id="KW-0812">Transmembrane</keyword>
<keyword id="KW-1133">Transmembrane helix</keyword>
<keyword id="KW-0813">Transport</keyword>
<keyword id="KW-0830">Ubiquinone</keyword>
<sequence>MFADISAQHWAFAIYVIGAIAICLTMIGLAALLGGRAQGRTKNKPFESGVDSVGTARLRFSAKFYLVAMFFVIFDVEALYLFAWSVSVRESGWVGFIEATIFIGLLLIGLVYLWRIGALEWSPRKPQLNNKNTD</sequence>
<name>NUOA_SHEON</name>
<feature type="chain" id="PRO_0000362777" description="NADH-quinone oxidoreductase subunit A">
    <location>
        <begin position="1"/>
        <end position="134"/>
    </location>
</feature>
<feature type="transmembrane region" description="Helical" evidence="1">
    <location>
        <begin position="12"/>
        <end position="32"/>
    </location>
</feature>
<feature type="transmembrane region" description="Helical" evidence="1">
    <location>
        <begin position="64"/>
        <end position="84"/>
    </location>
</feature>
<feature type="transmembrane region" description="Helical" evidence="1">
    <location>
        <begin position="93"/>
        <end position="113"/>
    </location>
</feature>
<gene>
    <name evidence="1" type="primary">nuoA</name>
    <name type="ordered locus">SO_1021</name>
</gene>
<organism>
    <name type="scientific">Shewanella oneidensis (strain ATCC 700550 / JCM 31522 / CIP 106686 / LMG 19005 / NCIMB 14063 / MR-1)</name>
    <dbReference type="NCBI Taxonomy" id="211586"/>
    <lineage>
        <taxon>Bacteria</taxon>
        <taxon>Pseudomonadati</taxon>
        <taxon>Pseudomonadota</taxon>
        <taxon>Gammaproteobacteria</taxon>
        <taxon>Alteromonadales</taxon>
        <taxon>Shewanellaceae</taxon>
        <taxon>Shewanella</taxon>
    </lineage>
</organism>